<feature type="chain" id="PRO_0000148776" description="Aspartyl/glutamyl-tRNA(Asn/Gln) amidotransferase subunit B">
    <location>
        <begin position="1"/>
        <end position="488"/>
    </location>
</feature>
<keyword id="KW-0067">ATP-binding</keyword>
<keyword id="KW-0436">Ligase</keyword>
<keyword id="KW-0547">Nucleotide-binding</keyword>
<keyword id="KW-0648">Protein biosynthesis</keyword>
<evidence type="ECO:0000250" key="1"/>
<evidence type="ECO:0000305" key="2"/>
<organism>
    <name type="scientific">Chlamydia muridarum (strain MoPn / Nigg)</name>
    <dbReference type="NCBI Taxonomy" id="243161"/>
    <lineage>
        <taxon>Bacteria</taxon>
        <taxon>Pseudomonadati</taxon>
        <taxon>Chlamydiota</taxon>
        <taxon>Chlamydiia</taxon>
        <taxon>Chlamydiales</taxon>
        <taxon>Chlamydiaceae</taxon>
        <taxon>Chlamydia/Chlamydophila group</taxon>
        <taxon>Chlamydia</taxon>
    </lineage>
</organism>
<gene>
    <name type="primary">gatB</name>
    <name type="ordered locus">TC_0272</name>
</gene>
<protein>
    <recommendedName>
        <fullName>Aspartyl/glutamyl-tRNA(Asn/Gln) amidotransferase subunit B</fullName>
        <shortName>Asp/Glu-ADT subunit B</shortName>
        <ecNumber>6.3.5.-</ecNumber>
    </recommendedName>
</protein>
<proteinExistence type="inferred from homology"/>
<reference key="1">
    <citation type="journal article" date="2000" name="Nucleic Acids Res.">
        <title>Genome sequences of Chlamydia trachomatis MoPn and Chlamydia pneumoniae AR39.</title>
        <authorList>
            <person name="Read T.D."/>
            <person name="Brunham R.C."/>
            <person name="Shen C."/>
            <person name="Gill S.R."/>
            <person name="Heidelberg J.F."/>
            <person name="White O."/>
            <person name="Hickey E.K."/>
            <person name="Peterson J.D."/>
            <person name="Utterback T.R."/>
            <person name="Berry K.J."/>
            <person name="Bass S."/>
            <person name="Linher K.D."/>
            <person name="Weidman J.F."/>
            <person name="Khouri H.M."/>
            <person name="Craven B."/>
            <person name="Bowman C."/>
            <person name="Dodson R.J."/>
            <person name="Gwinn M.L."/>
            <person name="Nelson W.C."/>
            <person name="DeBoy R.T."/>
            <person name="Kolonay J.F."/>
            <person name="McClarty G."/>
            <person name="Salzberg S.L."/>
            <person name="Eisen J.A."/>
            <person name="Fraser C.M."/>
        </authorList>
    </citation>
    <scope>NUCLEOTIDE SEQUENCE [LARGE SCALE GENOMIC DNA]</scope>
    <source>
        <strain>MoPn / Nigg</strain>
    </source>
</reference>
<sequence>MGIAHTEWESVIGLEVHVELNTASKLFSPARNHFGDEPNTNISPVCTGMPGALPVLNKDAVRKAVLFGCAVEGDVALFSRFDRKSYFYPDSPRNFQITQYEHPIVRGGCVRAIVEGEEKTFELAQTHLEDDAGMLKHFGDFAGVDYNRAGVPLIEIVSKPCMFSAEDAVAYANALVSILSYIGISDCNMEEGSVRFDVNISVRPKGSKELRNKVEIKNMNSFTFMAQALEAEKHRQIEEYLSHPNEDPKKVVPAATYRWDPEKKKTVLMRLKERAEDYMYFVEPDLPVLQITESYIDEVRQTLPELPHSKYMRYITDFDLAEDLAMILVSDRHTAHFFETATMSCKNYRALSNWITVEFAGRCKATGKTLPFTGILPEWVAQLVNFIDRGVITGKIAKEIADKMVSSFGESPEDILRRHPSLLPMTDDHALRAIVKEVVAQNAASVEDYKNGKAKALGFLVGQIMKRTEGKAPPKRVNELLLAAMRDA</sequence>
<name>GATB_CHLMU</name>
<dbReference type="EC" id="6.3.5.-"/>
<dbReference type="EMBL" id="AE002160">
    <property type="protein sequence ID" value="AAF39140.1"/>
    <property type="molecule type" value="Genomic_DNA"/>
</dbReference>
<dbReference type="PIR" id="B81722">
    <property type="entry name" value="B81722"/>
</dbReference>
<dbReference type="RefSeq" id="WP_010229997.1">
    <property type="nucleotide sequence ID" value="NZ_CP063055.1"/>
</dbReference>
<dbReference type="SMR" id="Q9PL36"/>
<dbReference type="GeneID" id="1246442"/>
<dbReference type="KEGG" id="cmu:TC_0272"/>
<dbReference type="eggNOG" id="COG0064">
    <property type="taxonomic scope" value="Bacteria"/>
</dbReference>
<dbReference type="HOGENOM" id="CLU_019240_0_0_0"/>
<dbReference type="OrthoDB" id="9804078at2"/>
<dbReference type="Proteomes" id="UP000000800">
    <property type="component" value="Chromosome"/>
</dbReference>
<dbReference type="GO" id="GO:0050566">
    <property type="term" value="F:asparaginyl-tRNA synthase (glutamine-hydrolyzing) activity"/>
    <property type="evidence" value="ECO:0007669"/>
    <property type="project" value="RHEA"/>
</dbReference>
<dbReference type="GO" id="GO:0005524">
    <property type="term" value="F:ATP binding"/>
    <property type="evidence" value="ECO:0007669"/>
    <property type="project" value="UniProtKB-KW"/>
</dbReference>
<dbReference type="GO" id="GO:0050567">
    <property type="term" value="F:glutaminyl-tRNA synthase (glutamine-hydrolyzing) activity"/>
    <property type="evidence" value="ECO:0007669"/>
    <property type="project" value="UniProtKB-UniRule"/>
</dbReference>
<dbReference type="GO" id="GO:0070681">
    <property type="term" value="P:glutaminyl-tRNAGln biosynthesis via transamidation"/>
    <property type="evidence" value="ECO:0007669"/>
    <property type="project" value="TreeGrafter"/>
</dbReference>
<dbReference type="GO" id="GO:0006412">
    <property type="term" value="P:translation"/>
    <property type="evidence" value="ECO:0007669"/>
    <property type="project" value="UniProtKB-UniRule"/>
</dbReference>
<dbReference type="FunFam" id="1.10.10.410:FF:000001">
    <property type="entry name" value="Aspartyl/glutamyl-tRNA(Asn/Gln) amidotransferase subunit B"/>
    <property type="match status" value="1"/>
</dbReference>
<dbReference type="Gene3D" id="1.10.10.410">
    <property type="match status" value="1"/>
</dbReference>
<dbReference type="Gene3D" id="1.10.150.380">
    <property type="entry name" value="GatB domain, N-terminal subdomain"/>
    <property type="match status" value="1"/>
</dbReference>
<dbReference type="HAMAP" id="MF_00121">
    <property type="entry name" value="GatB"/>
    <property type="match status" value="1"/>
</dbReference>
<dbReference type="InterPro" id="IPR017959">
    <property type="entry name" value="Asn/Gln-tRNA_amidoTrfase_suB/E"/>
</dbReference>
<dbReference type="InterPro" id="IPR006075">
    <property type="entry name" value="Asn/Gln-tRNA_Trfase_suB/E_cat"/>
</dbReference>
<dbReference type="InterPro" id="IPR018027">
    <property type="entry name" value="Asn/Gln_amidotransferase"/>
</dbReference>
<dbReference type="InterPro" id="IPR003789">
    <property type="entry name" value="Asn/Gln_tRNA_amidoTrase-B-like"/>
</dbReference>
<dbReference type="InterPro" id="IPR004413">
    <property type="entry name" value="GatB"/>
</dbReference>
<dbReference type="InterPro" id="IPR042114">
    <property type="entry name" value="GatB_C_1"/>
</dbReference>
<dbReference type="InterPro" id="IPR023168">
    <property type="entry name" value="GatB_Yqey_C_2"/>
</dbReference>
<dbReference type="InterPro" id="IPR017958">
    <property type="entry name" value="Gln-tRNA_amidoTrfase_suB_CS"/>
</dbReference>
<dbReference type="InterPro" id="IPR014746">
    <property type="entry name" value="Gln_synth/guanido_kin_cat_dom"/>
</dbReference>
<dbReference type="NCBIfam" id="TIGR00133">
    <property type="entry name" value="gatB"/>
    <property type="match status" value="1"/>
</dbReference>
<dbReference type="NCBIfam" id="NF004012">
    <property type="entry name" value="PRK05477.1-2"/>
    <property type="match status" value="1"/>
</dbReference>
<dbReference type="NCBIfam" id="NF004014">
    <property type="entry name" value="PRK05477.1-4"/>
    <property type="match status" value="1"/>
</dbReference>
<dbReference type="PANTHER" id="PTHR11659">
    <property type="entry name" value="GLUTAMYL-TRNA GLN AMIDOTRANSFERASE SUBUNIT B MITOCHONDRIAL AND PROKARYOTIC PET112-RELATED"/>
    <property type="match status" value="1"/>
</dbReference>
<dbReference type="PANTHER" id="PTHR11659:SF0">
    <property type="entry name" value="GLUTAMYL-TRNA(GLN) AMIDOTRANSFERASE SUBUNIT B, MITOCHONDRIAL"/>
    <property type="match status" value="1"/>
</dbReference>
<dbReference type="Pfam" id="PF02934">
    <property type="entry name" value="GatB_N"/>
    <property type="match status" value="1"/>
</dbReference>
<dbReference type="Pfam" id="PF02637">
    <property type="entry name" value="GatB_Yqey"/>
    <property type="match status" value="1"/>
</dbReference>
<dbReference type="SMART" id="SM00845">
    <property type="entry name" value="GatB_Yqey"/>
    <property type="match status" value="1"/>
</dbReference>
<dbReference type="SUPFAM" id="SSF89095">
    <property type="entry name" value="GatB/YqeY motif"/>
    <property type="match status" value="1"/>
</dbReference>
<dbReference type="SUPFAM" id="SSF55931">
    <property type="entry name" value="Glutamine synthetase/guanido kinase"/>
    <property type="match status" value="1"/>
</dbReference>
<dbReference type="PROSITE" id="PS01234">
    <property type="entry name" value="GATB"/>
    <property type="match status" value="1"/>
</dbReference>
<accession>Q9PL36</accession>
<comment type="function">
    <text evidence="1">Allows the formation of correctly charged Asn-tRNA(Asn) or Gln-tRNA(Gln) through the transamidation of misacylated Asp-tRNA(Asn) or Glu-tRNA(Gln) in organisms which lack either or both of asparaginyl-tRNA or glutaminyl-tRNA synthetases. The reaction takes place in the presence of glutamine and ATP through an activated phospho-Asp-tRNA(Asn) or phospho-Glu-tRNA(Gln) (By similarity).</text>
</comment>
<comment type="catalytic activity">
    <reaction>
        <text>L-glutamyl-tRNA(Gln) + L-glutamine + ATP + H2O = L-glutaminyl-tRNA(Gln) + L-glutamate + ADP + phosphate + H(+)</text>
        <dbReference type="Rhea" id="RHEA:17521"/>
        <dbReference type="Rhea" id="RHEA-COMP:9681"/>
        <dbReference type="Rhea" id="RHEA-COMP:9684"/>
        <dbReference type="ChEBI" id="CHEBI:15377"/>
        <dbReference type="ChEBI" id="CHEBI:15378"/>
        <dbReference type="ChEBI" id="CHEBI:29985"/>
        <dbReference type="ChEBI" id="CHEBI:30616"/>
        <dbReference type="ChEBI" id="CHEBI:43474"/>
        <dbReference type="ChEBI" id="CHEBI:58359"/>
        <dbReference type="ChEBI" id="CHEBI:78520"/>
        <dbReference type="ChEBI" id="CHEBI:78521"/>
        <dbReference type="ChEBI" id="CHEBI:456216"/>
    </reaction>
</comment>
<comment type="catalytic activity">
    <reaction>
        <text>L-aspartyl-tRNA(Asn) + L-glutamine + ATP + H2O = L-asparaginyl-tRNA(Asn) + L-glutamate + ADP + phosphate + 2 H(+)</text>
        <dbReference type="Rhea" id="RHEA:14513"/>
        <dbReference type="Rhea" id="RHEA-COMP:9674"/>
        <dbReference type="Rhea" id="RHEA-COMP:9677"/>
        <dbReference type="ChEBI" id="CHEBI:15377"/>
        <dbReference type="ChEBI" id="CHEBI:15378"/>
        <dbReference type="ChEBI" id="CHEBI:29985"/>
        <dbReference type="ChEBI" id="CHEBI:30616"/>
        <dbReference type="ChEBI" id="CHEBI:43474"/>
        <dbReference type="ChEBI" id="CHEBI:58359"/>
        <dbReference type="ChEBI" id="CHEBI:78515"/>
        <dbReference type="ChEBI" id="CHEBI:78516"/>
        <dbReference type="ChEBI" id="CHEBI:456216"/>
    </reaction>
</comment>
<comment type="subunit">
    <text evidence="1">Heterotrimer of A, B and C subunits.</text>
</comment>
<comment type="similarity">
    <text evidence="2">Belongs to the GatB/GatE family. GatB subfamily.</text>
</comment>